<keyword id="KW-0328">Glycosyltransferase</keyword>
<keyword id="KW-0460">Magnesium</keyword>
<keyword id="KW-0665">Pyrimidine biosynthesis</keyword>
<keyword id="KW-0808">Transferase</keyword>
<comment type="function">
    <text evidence="1">Catalyzes the transfer of a ribosyl phosphate group from 5-phosphoribose 1-diphosphate to orotate, leading to the formation of orotidine monophosphate (OMP).</text>
</comment>
<comment type="catalytic activity">
    <reaction evidence="1">
        <text>orotidine 5'-phosphate + diphosphate = orotate + 5-phospho-alpha-D-ribose 1-diphosphate</text>
        <dbReference type="Rhea" id="RHEA:10380"/>
        <dbReference type="ChEBI" id="CHEBI:30839"/>
        <dbReference type="ChEBI" id="CHEBI:33019"/>
        <dbReference type="ChEBI" id="CHEBI:57538"/>
        <dbReference type="ChEBI" id="CHEBI:58017"/>
        <dbReference type="EC" id="2.4.2.10"/>
    </reaction>
</comment>
<comment type="cofactor">
    <cofactor evidence="1">
        <name>Mg(2+)</name>
        <dbReference type="ChEBI" id="CHEBI:18420"/>
    </cofactor>
</comment>
<comment type="pathway">
    <text evidence="1">Pyrimidine metabolism; UMP biosynthesis via de novo pathway; UMP from orotate: step 1/2.</text>
</comment>
<comment type="subunit">
    <text evidence="1">Homodimer.</text>
</comment>
<comment type="similarity">
    <text evidence="1">Belongs to the purine/pyrimidine phosphoribosyltransferase family. PyrE subfamily.</text>
</comment>
<sequence>MKPYQRQFIEFALSKQVLKFGEFTLKSGRKSPYFFNAGLFNTGRDLALLGRFYAEALVDSGIEFDLLFGPAYKGIPIATTTAVALAEHHDRDLPYCFNRKEAKNHGEGGNLVGSPLQGRVMLVDDVITAGTAIRESMEIIQAQGALLAGVLISLDRQERGRGEISAIQEVERDYGCQVISIITLKELIAYLEEKPEMAEHLASVRAYREAYGV</sequence>
<organism>
    <name type="scientific">Klebsiella pneumoniae subsp. pneumoniae (strain ATCC 700721 / MGH 78578)</name>
    <dbReference type="NCBI Taxonomy" id="272620"/>
    <lineage>
        <taxon>Bacteria</taxon>
        <taxon>Pseudomonadati</taxon>
        <taxon>Pseudomonadota</taxon>
        <taxon>Gammaproteobacteria</taxon>
        <taxon>Enterobacterales</taxon>
        <taxon>Enterobacteriaceae</taxon>
        <taxon>Klebsiella/Raoultella group</taxon>
        <taxon>Klebsiella</taxon>
        <taxon>Klebsiella pneumoniae complex</taxon>
    </lineage>
</organism>
<evidence type="ECO:0000255" key="1">
    <source>
        <dbReference type="HAMAP-Rule" id="MF_01208"/>
    </source>
</evidence>
<gene>
    <name evidence="1" type="primary">pyrE</name>
    <name type="ordered locus">KPN78578_39440</name>
    <name type="ORF">KPN_03983</name>
</gene>
<reference key="1">
    <citation type="submission" date="2006-09" db="EMBL/GenBank/DDBJ databases">
        <authorList>
            <consortium name="The Klebsiella pneumonia Genome Sequencing Project"/>
            <person name="McClelland M."/>
            <person name="Sanderson E.K."/>
            <person name="Spieth J."/>
            <person name="Clifton W.S."/>
            <person name="Latreille P."/>
            <person name="Sabo A."/>
            <person name="Pepin K."/>
            <person name="Bhonagiri V."/>
            <person name="Porwollik S."/>
            <person name="Ali J."/>
            <person name="Wilson R.K."/>
        </authorList>
    </citation>
    <scope>NUCLEOTIDE SEQUENCE [LARGE SCALE GENOMIC DNA]</scope>
    <source>
        <strain>ATCC 700721 / MGH 78578</strain>
    </source>
</reference>
<feature type="chain" id="PRO_1000066244" description="Orotate phosphoribosyltransferase">
    <location>
        <begin position="1"/>
        <end position="213"/>
    </location>
</feature>
<feature type="binding site" description="in other chain" evidence="1">
    <location>
        <position position="26"/>
    </location>
    <ligand>
        <name>5-phospho-alpha-D-ribose 1-diphosphate</name>
        <dbReference type="ChEBI" id="CHEBI:58017"/>
        <note>ligand shared between dimeric partners</note>
    </ligand>
</feature>
<feature type="binding site" evidence="1">
    <location>
        <begin position="34"/>
        <end position="35"/>
    </location>
    <ligand>
        <name>orotate</name>
        <dbReference type="ChEBI" id="CHEBI:30839"/>
    </ligand>
</feature>
<feature type="binding site" description="in other chain" evidence="1">
    <location>
        <begin position="72"/>
        <end position="73"/>
    </location>
    <ligand>
        <name>5-phospho-alpha-D-ribose 1-diphosphate</name>
        <dbReference type="ChEBI" id="CHEBI:58017"/>
        <note>ligand shared between dimeric partners</note>
    </ligand>
</feature>
<feature type="binding site" evidence="1">
    <location>
        <position position="99"/>
    </location>
    <ligand>
        <name>5-phospho-alpha-D-ribose 1-diphosphate</name>
        <dbReference type="ChEBI" id="CHEBI:58017"/>
        <note>ligand shared between dimeric partners</note>
    </ligand>
</feature>
<feature type="binding site" description="in other chain" evidence="1">
    <location>
        <position position="100"/>
    </location>
    <ligand>
        <name>5-phospho-alpha-D-ribose 1-diphosphate</name>
        <dbReference type="ChEBI" id="CHEBI:58017"/>
        <note>ligand shared between dimeric partners</note>
    </ligand>
</feature>
<feature type="binding site" evidence="1">
    <location>
        <position position="103"/>
    </location>
    <ligand>
        <name>5-phospho-alpha-D-ribose 1-diphosphate</name>
        <dbReference type="ChEBI" id="CHEBI:58017"/>
        <note>ligand shared between dimeric partners</note>
    </ligand>
</feature>
<feature type="binding site" evidence="1">
    <location>
        <position position="105"/>
    </location>
    <ligand>
        <name>5-phospho-alpha-D-ribose 1-diphosphate</name>
        <dbReference type="ChEBI" id="CHEBI:58017"/>
        <note>ligand shared between dimeric partners</note>
    </ligand>
</feature>
<feature type="binding site" description="in other chain" evidence="1">
    <location>
        <begin position="124"/>
        <end position="132"/>
    </location>
    <ligand>
        <name>5-phospho-alpha-D-ribose 1-diphosphate</name>
        <dbReference type="ChEBI" id="CHEBI:58017"/>
        <note>ligand shared between dimeric partners</note>
    </ligand>
</feature>
<feature type="binding site" evidence="1">
    <location>
        <position position="128"/>
    </location>
    <ligand>
        <name>orotate</name>
        <dbReference type="ChEBI" id="CHEBI:30839"/>
    </ligand>
</feature>
<feature type="binding site" evidence="1">
    <location>
        <position position="156"/>
    </location>
    <ligand>
        <name>orotate</name>
        <dbReference type="ChEBI" id="CHEBI:30839"/>
    </ligand>
</feature>
<accession>A6TFN4</accession>
<protein>
    <recommendedName>
        <fullName evidence="1">Orotate phosphoribosyltransferase</fullName>
        <shortName evidence="1">OPRT</shortName>
        <shortName evidence="1">OPRTase</shortName>
        <ecNumber evidence="1">2.4.2.10</ecNumber>
    </recommendedName>
</protein>
<proteinExistence type="inferred from homology"/>
<name>PYRE_KLEP7</name>
<dbReference type="EC" id="2.4.2.10" evidence="1"/>
<dbReference type="EMBL" id="CP000647">
    <property type="protein sequence ID" value="ABR79368.1"/>
    <property type="molecule type" value="Genomic_DNA"/>
</dbReference>
<dbReference type="RefSeq" id="WP_015959140.1">
    <property type="nucleotide sequence ID" value="NC_009648.1"/>
</dbReference>
<dbReference type="SMR" id="A6TFN4"/>
<dbReference type="STRING" id="272620.KPN_03983"/>
<dbReference type="jPOST" id="A6TFN4"/>
<dbReference type="PaxDb" id="272620-KPN_03983"/>
<dbReference type="EnsemblBacteria" id="ABR79368">
    <property type="protein sequence ID" value="ABR79368"/>
    <property type="gene ID" value="KPN_03983"/>
</dbReference>
<dbReference type="KEGG" id="kpn:KPN_03983"/>
<dbReference type="HOGENOM" id="CLU_074878_0_1_6"/>
<dbReference type="UniPathway" id="UPA00070">
    <property type="reaction ID" value="UER00119"/>
</dbReference>
<dbReference type="Proteomes" id="UP000000265">
    <property type="component" value="Chromosome"/>
</dbReference>
<dbReference type="GO" id="GO:0005737">
    <property type="term" value="C:cytoplasm"/>
    <property type="evidence" value="ECO:0007669"/>
    <property type="project" value="TreeGrafter"/>
</dbReference>
<dbReference type="GO" id="GO:0000287">
    <property type="term" value="F:magnesium ion binding"/>
    <property type="evidence" value="ECO:0007669"/>
    <property type="project" value="UniProtKB-UniRule"/>
</dbReference>
<dbReference type="GO" id="GO:0004588">
    <property type="term" value="F:orotate phosphoribosyltransferase activity"/>
    <property type="evidence" value="ECO:0007669"/>
    <property type="project" value="UniProtKB-UniRule"/>
</dbReference>
<dbReference type="GO" id="GO:0006207">
    <property type="term" value="P:'de novo' pyrimidine nucleobase biosynthetic process"/>
    <property type="evidence" value="ECO:0007669"/>
    <property type="project" value="TreeGrafter"/>
</dbReference>
<dbReference type="GO" id="GO:0044205">
    <property type="term" value="P:'de novo' UMP biosynthetic process"/>
    <property type="evidence" value="ECO:0007669"/>
    <property type="project" value="UniProtKB-UniRule"/>
</dbReference>
<dbReference type="GO" id="GO:0046132">
    <property type="term" value="P:pyrimidine ribonucleoside biosynthetic process"/>
    <property type="evidence" value="ECO:0007669"/>
    <property type="project" value="TreeGrafter"/>
</dbReference>
<dbReference type="CDD" id="cd06223">
    <property type="entry name" value="PRTases_typeI"/>
    <property type="match status" value="1"/>
</dbReference>
<dbReference type="FunFam" id="3.40.50.2020:FF:000008">
    <property type="entry name" value="Orotate phosphoribosyltransferase"/>
    <property type="match status" value="1"/>
</dbReference>
<dbReference type="Gene3D" id="3.40.50.2020">
    <property type="match status" value="1"/>
</dbReference>
<dbReference type="HAMAP" id="MF_01208">
    <property type="entry name" value="PyrE"/>
    <property type="match status" value="1"/>
</dbReference>
<dbReference type="InterPro" id="IPR023031">
    <property type="entry name" value="OPRT"/>
</dbReference>
<dbReference type="InterPro" id="IPR004467">
    <property type="entry name" value="Or_phspho_trans_dom"/>
</dbReference>
<dbReference type="InterPro" id="IPR000836">
    <property type="entry name" value="PRibTrfase_dom"/>
</dbReference>
<dbReference type="InterPro" id="IPR029057">
    <property type="entry name" value="PRTase-like"/>
</dbReference>
<dbReference type="NCBIfam" id="TIGR00336">
    <property type="entry name" value="pyrE"/>
    <property type="match status" value="1"/>
</dbReference>
<dbReference type="PANTHER" id="PTHR46683">
    <property type="entry name" value="OROTATE PHOSPHORIBOSYLTRANSFERASE 1-RELATED"/>
    <property type="match status" value="1"/>
</dbReference>
<dbReference type="PANTHER" id="PTHR46683:SF1">
    <property type="entry name" value="OROTATE PHOSPHORIBOSYLTRANSFERASE 1-RELATED"/>
    <property type="match status" value="1"/>
</dbReference>
<dbReference type="Pfam" id="PF00156">
    <property type="entry name" value="Pribosyltran"/>
    <property type="match status" value="1"/>
</dbReference>
<dbReference type="SUPFAM" id="SSF53271">
    <property type="entry name" value="PRTase-like"/>
    <property type="match status" value="1"/>
</dbReference>
<dbReference type="PROSITE" id="PS00103">
    <property type="entry name" value="PUR_PYR_PR_TRANSFER"/>
    <property type="match status" value="1"/>
</dbReference>